<keyword id="KW-0032">Aminotransferase</keyword>
<keyword id="KW-0056">Arginine metabolism</keyword>
<keyword id="KW-0663">Pyridoxal phosphate</keyword>
<keyword id="KW-1185">Reference proteome</keyword>
<keyword id="KW-0808">Transferase</keyword>
<organism>
    <name type="scientific">Citrobacter koseri (strain ATCC BAA-895 / CDC 4225-83 / SGSC4696)</name>
    <dbReference type="NCBI Taxonomy" id="290338"/>
    <lineage>
        <taxon>Bacteria</taxon>
        <taxon>Pseudomonadati</taxon>
        <taxon>Pseudomonadota</taxon>
        <taxon>Gammaproteobacteria</taxon>
        <taxon>Enterobacterales</taxon>
        <taxon>Enterobacteriaceae</taxon>
        <taxon>Citrobacter</taxon>
    </lineage>
</organism>
<dbReference type="EC" id="2.6.1.81" evidence="1"/>
<dbReference type="EMBL" id="CP000822">
    <property type="protein sequence ID" value="ABV12903.1"/>
    <property type="molecule type" value="Genomic_DNA"/>
</dbReference>
<dbReference type="RefSeq" id="WP_012132640.1">
    <property type="nucleotide sequence ID" value="NC_009792.1"/>
</dbReference>
<dbReference type="SMR" id="A8AHE0"/>
<dbReference type="STRING" id="290338.CKO_01774"/>
<dbReference type="GeneID" id="45135796"/>
<dbReference type="KEGG" id="cko:CKO_01774"/>
<dbReference type="HOGENOM" id="CLU_016922_10_1_6"/>
<dbReference type="OrthoDB" id="9801052at2"/>
<dbReference type="UniPathway" id="UPA00185">
    <property type="reaction ID" value="UER00281"/>
</dbReference>
<dbReference type="Proteomes" id="UP000008148">
    <property type="component" value="Chromosome"/>
</dbReference>
<dbReference type="GO" id="GO:0042802">
    <property type="term" value="F:identical protein binding"/>
    <property type="evidence" value="ECO:0007669"/>
    <property type="project" value="TreeGrafter"/>
</dbReference>
<dbReference type="GO" id="GO:0030170">
    <property type="term" value="F:pyridoxal phosphate binding"/>
    <property type="evidence" value="ECO:0007669"/>
    <property type="project" value="UniProtKB-UniRule"/>
</dbReference>
<dbReference type="GO" id="GO:0043825">
    <property type="term" value="F:succinylornithine transaminase activity"/>
    <property type="evidence" value="ECO:0007669"/>
    <property type="project" value="UniProtKB-EC"/>
</dbReference>
<dbReference type="GO" id="GO:1901607">
    <property type="term" value="P:alpha-amino acid biosynthetic process"/>
    <property type="evidence" value="ECO:0007669"/>
    <property type="project" value="UniProtKB-ARBA"/>
</dbReference>
<dbReference type="GO" id="GO:0019544">
    <property type="term" value="P:arginine catabolic process to glutamate"/>
    <property type="evidence" value="ECO:0007669"/>
    <property type="project" value="UniProtKB-UniRule"/>
</dbReference>
<dbReference type="GO" id="GO:0019545">
    <property type="term" value="P:arginine catabolic process to succinate"/>
    <property type="evidence" value="ECO:0007669"/>
    <property type="project" value="UniProtKB-UniRule"/>
</dbReference>
<dbReference type="GO" id="GO:0006593">
    <property type="term" value="P:ornithine catabolic process"/>
    <property type="evidence" value="ECO:0007669"/>
    <property type="project" value="InterPro"/>
</dbReference>
<dbReference type="CDD" id="cd00610">
    <property type="entry name" value="OAT_like"/>
    <property type="match status" value="1"/>
</dbReference>
<dbReference type="FunFam" id="3.40.640.10:FF:000004">
    <property type="entry name" value="Acetylornithine aminotransferase"/>
    <property type="match status" value="1"/>
</dbReference>
<dbReference type="Gene3D" id="3.90.1150.10">
    <property type="entry name" value="Aspartate Aminotransferase, domain 1"/>
    <property type="match status" value="1"/>
</dbReference>
<dbReference type="Gene3D" id="3.40.640.10">
    <property type="entry name" value="Type I PLP-dependent aspartate aminotransferase-like (Major domain)"/>
    <property type="match status" value="1"/>
</dbReference>
<dbReference type="HAMAP" id="MF_01107">
    <property type="entry name" value="ArgD_aminotrans_3"/>
    <property type="match status" value="1"/>
</dbReference>
<dbReference type="HAMAP" id="MF_01173">
    <property type="entry name" value="AstC_aminotrans_3"/>
    <property type="match status" value="1"/>
</dbReference>
<dbReference type="InterPro" id="IPR017652">
    <property type="entry name" value="Ac/SucOrn_transaminase_bac"/>
</dbReference>
<dbReference type="InterPro" id="IPR004636">
    <property type="entry name" value="AcOrn/SuccOrn_fam"/>
</dbReference>
<dbReference type="InterPro" id="IPR005814">
    <property type="entry name" value="Aminotrans_3"/>
</dbReference>
<dbReference type="InterPro" id="IPR049704">
    <property type="entry name" value="Aminotrans_3_PPA_site"/>
</dbReference>
<dbReference type="InterPro" id="IPR050103">
    <property type="entry name" value="Class-III_PLP-dep_AT"/>
</dbReference>
<dbReference type="InterPro" id="IPR015424">
    <property type="entry name" value="PyrdxlP-dep_Trfase"/>
</dbReference>
<dbReference type="InterPro" id="IPR015421">
    <property type="entry name" value="PyrdxlP-dep_Trfase_major"/>
</dbReference>
<dbReference type="InterPro" id="IPR015422">
    <property type="entry name" value="PyrdxlP-dep_Trfase_small"/>
</dbReference>
<dbReference type="InterPro" id="IPR026330">
    <property type="entry name" value="SOAT"/>
</dbReference>
<dbReference type="NCBIfam" id="TIGR03246">
    <property type="entry name" value="arg_catab_astC"/>
    <property type="match status" value="1"/>
</dbReference>
<dbReference type="NCBIfam" id="TIGR00707">
    <property type="entry name" value="argD"/>
    <property type="match status" value="1"/>
</dbReference>
<dbReference type="NCBIfam" id="NF002325">
    <property type="entry name" value="PRK01278.1"/>
    <property type="match status" value="1"/>
</dbReference>
<dbReference type="NCBIfam" id="NF003468">
    <property type="entry name" value="PRK05093.1"/>
    <property type="match status" value="1"/>
</dbReference>
<dbReference type="NCBIfam" id="NF009047">
    <property type="entry name" value="PRK12381.1"/>
    <property type="match status" value="1"/>
</dbReference>
<dbReference type="PANTHER" id="PTHR11986">
    <property type="entry name" value="AMINOTRANSFERASE CLASS III"/>
    <property type="match status" value="1"/>
</dbReference>
<dbReference type="PANTHER" id="PTHR11986:SF113">
    <property type="entry name" value="SUCCINYLORNITHINE TRANSAMINASE"/>
    <property type="match status" value="1"/>
</dbReference>
<dbReference type="Pfam" id="PF00202">
    <property type="entry name" value="Aminotran_3"/>
    <property type="match status" value="1"/>
</dbReference>
<dbReference type="PIRSF" id="PIRSF000521">
    <property type="entry name" value="Transaminase_4ab_Lys_Orn"/>
    <property type="match status" value="1"/>
</dbReference>
<dbReference type="SUPFAM" id="SSF53383">
    <property type="entry name" value="PLP-dependent transferases"/>
    <property type="match status" value="1"/>
</dbReference>
<dbReference type="PROSITE" id="PS00600">
    <property type="entry name" value="AA_TRANSFER_CLASS_3"/>
    <property type="match status" value="1"/>
</dbReference>
<gene>
    <name evidence="1" type="primary">astC</name>
    <name evidence="1" type="synonym">argM</name>
    <name type="ordered locus">CKO_01774</name>
</gene>
<evidence type="ECO:0000255" key="1">
    <source>
        <dbReference type="HAMAP-Rule" id="MF_01173"/>
    </source>
</evidence>
<comment type="function">
    <text evidence="1">Catalyzes the transamination of N(2)-succinylornithine and alpha-ketoglutarate into N(2)-succinylglutamate semialdehyde and glutamate. Can also act as an acetylornithine aminotransferase.</text>
</comment>
<comment type="catalytic activity">
    <reaction evidence="1">
        <text>N(2)-succinyl-L-ornithine + 2-oxoglutarate = N-succinyl-L-glutamate 5-semialdehyde + L-glutamate</text>
        <dbReference type="Rhea" id="RHEA:16953"/>
        <dbReference type="ChEBI" id="CHEBI:16810"/>
        <dbReference type="ChEBI" id="CHEBI:29985"/>
        <dbReference type="ChEBI" id="CHEBI:58514"/>
        <dbReference type="ChEBI" id="CHEBI:58520"/>
        <dbReference type="EC" id="2.6.1.81"/>
    </reaction>
</comment>
<comment type="cofactor">
    <cofactor evidence="1">
        <name>pyridoxal 5'-phosphate</name>
        <dbReference type="ChEBI" id="CHEBI:597326"/>
    </cofactor>
</comment>
<comment type="pathway">
    <text evidence="1">Amino-acid degradation; L-arginine degradation via AST pathway; L-glutamate and succinate from L-arginine: step 3/5.</text>
</comment>
<comment type="similarity">
    <text evidence="1">Belongs to the class-III pyridoxal-phosphate-dependent aminotransferase family. AstC subfamily.</text>
</comment>
<accession>A8AHE0</accession>
<protein>
    <recommendedName>
        <fullName evidence="1">Succinylornithine transaminase</fullName>
        <ecNumber evidence="1">2.6.1.81</ecNumber>
    </recommendedName>
    <alternativeName>
        <fullName evidence="1">Succinylornithine aminotransferase</fullName>
    </alternativeName>
</protein>
<sequence length="406" mass="43500">MSLSITRENFDEWMMPVYAPAPFIPVRGEGSRLWDQQGKEYIDFAGGIAVNALGHAHPALREALNEQASKFWHTGNGYTNEPVLRLAKMLIDATFAERVFFCNSGAEANEAALKLARKYAHDRFGTHKSGIVAFKNAFHGRTLFTVSAGGQPAYSQDFAPLPPDIRHAVYNDLNAASELIDDTTCAVIVEPMQGEGGVLPATKAFLQGLRELCDRHNALLIFDEVQTGVGRTGELYAYMHYGVTPDLLTTAKALGGGFPIGALLATEKCASVMTVGTHGTTYGGNPLASAVAGKLLEIVNTPEMLNGVKQRHDGFVERLNAINERFGLFSEIRGLGLLIGCVLEAEFAGKAKLISQEAAKAGVMVLIAGANVVRFAPALNVSKEEVATGLDRFALACERIKAGGSS</sequence>
<name>ASTC_CITK8</name>
<reference key="1">
    <citation type="submission" date="2007-08" db="EMBL/GenBank/DDBJ databases">
        <authorList>
            <consortium name="The Citrobacter koseri Genome Sequencing Project"/>
            <person name="McClelland M."/>
            <person name="Sanderson E.K."/>
            <person name="Porwollik S."/>
            <person name="Spieth J."/>
            <person name="Clifton W.S."/>
            <person name="Latreille P."/>
            <person name="Courtney L."/>
            <person name="Wang C."/>
            <person name="Pepin K."/>
            <person name="Bhonagiri V."/>
            <person name="Nash W."/>
            <person name="Johnson M."/>
            <person name="Thiruvilangam P."/>
            <person name="Wilson R."/>
        </authorList>
    </citation>
    <scope>NUCLEOTIDE SEQUENCE [LARGE SCALE GENOMIC DNA]</scope>
    <source>
        <strain>ATCC BAA-895 / CDC 4225-83 / SGSC4696</strain>
    </source>
</reference>
<proteinExistence type="inferred from homology"/>
<feature type="chain" id="PRO_1000164372" description="Succinylornithine transaminase">
    <location>
        <begin position="1"/>
        <end position="406"/>
    </location>
</feature>
<feature type="modified residue" description="N6-(pyridoxal phosphate)lysine" evidence="1">
    <location>
        <position position="252"/>
    </location>
</feature>